<reference key="1">
    <citation type="journal article" date="1997" name="Zool. Sci.">
        <title>Molecular phylogeny from nucleotide sequences of the mitochondrial cytochrome b gene and evolutionary history of Eurasian soricine shrews (Mammalia, Insectivora).</title>
        <authorList>
            <person name="Ohdachi S."/>
            <person name="Masuda R."/>
            <person name="Abe H."/>
            <person name="Adachi J."/>
            <person name="Dokuchaev N.E."/>
            <person name="Haukisalmi V."/>
            <person name="Yoshida M.C."/>
        </authorList>
    </citation>
    <scope>NUCLEOTIDE SEQUENCE [GENOMIC DNA]</scope>
    <source>
        <strain>Isolate #5861</strain>
        <tissue>Muscle</tissue>
    </source>
</reference>
<sequence length="134" mass="15204">MTNLRKTHPLMKIINSSFIDLPAPSNISSWWNFGSLLGVCLIIQILTGLFLAMHYTSDTMTAFSSVTHICRDVNYGWLIRYLHANGASMFFICLFLHVGRGLYYGSYMYLETWNIGVLLLFAVMATAFMGYVLP</sequence>
<accession>O21425</accession>
<geneLocation type="mitochondrion"/>
<organism>
    <name type="scientific">Sorex shinto sadonis</name>
    <name type="common">Sado shrew</name>
    <name type="synonym">Sorex sadonis</name>
    <dbReference type="NCBI Taxonomy" id="62285"/>
    <lineage>
        <taxon>Eukaryota</taxon>
        <taxon>Metazoa</taxon>
        <taxon>Chordata</taxon>
        <taxon>Craniata</taxon>
        <taxon>Vertebrata</taxon>
        <taxon>Euteleostomi</taxon>
        <taxon>Mammalia</taxon>
        <taxon>Eutheria</taxon>
        <taxon>Laurasiatheria</taxon>
        <taxon>Eulipotyphla</taxon>
        <taxon>Soricidae</taxon>
        <taxon>Soricinae</taxon>
        <taxon>Sorex</taxon>
    </lineage>
</organism>
<proteinExistence type="inferred from homology"/>
<evidence type="ECO:0000250" key="1"/>
<evidence type="ECO:0000250" key="2">
    <source>
        <dbReference type="UniProtKB" id="P00157"/>
    </source>
</evidence>
<evidence type="ECO:0000255" key="3">
    <source>
        <dbReference type="PROSITE-ProRule" id="PRU00968"/>
    </source>
</evidence>
<keyword id="KW-0249">Electron transport</keyword>
<keyword id="KW-0349">Heme</keyword>
<keyword id="KW-0408">Iron</keyword>
<keyword id="KW-0472">Membrane</keyword>
<keyword id="KW-0479">Metal-binding</keyword>
<keyword id="KW-0496">Mitochondrion</keyword>
<keyword id="KW-0999">Mitochondrion inner membrane</keyword>
<keyword id="KW-0679">Respiratory chain</keyword>
<keyword id="KW-0812">Transmembrane</keyword>
<keyword id="KW-1133">Transmembrane helix</keyword>
<keyword id="KW-0813">Transport</keyword>
<keyword id="KW-0830">Ubiquinone</keyword>
<protein>
    <recommendedName>
        <fullName>Cytochrome b</fullName>
    </recommendedName>
    <alternativeName>
        <fullName>Complex III subunit 3</fullName>
    </alternativeName>
    <alternativeName>
        <fullName>Complex III subunit III</fullName>
    </alternativeName>
    <alternativeName>
        <fullName>Cytochrome b-c1 complex subunit 3</fullName>
    </alternativeName>
    <alternativeName>
        <fullName>Ubiquinol-cytochrome-c reductase complex cytochrome b subunit</fullName>
    </alternativeName>
</protein>
<dbReference type="EMBL" id="D85366">
    <property type="protein sequence ID" value="BAA21359.1"/>
    <property type="molecule type" value="Genomic_DNA"/>
</dbReference>
<dbReference type="SMR" id="O21425"/>
<dbReference type="GO" id="GO:0005743">
    <property type="term" value="C:mitochondrial inner membrane"/>
    <property type="evidence" value="ECO:0007669"/>
    <property type="project" value="UniProtKB-SubCell"/>
</dbReference>
<dbReference type="GO" id="GO:0046872">
    <property type="term" value="F:metal ion binding"/>
    <property type="evidence" value="ECO:0007669"/>
    <property type="project" value="UniProtKB-KW"/>
</dbReference>
<dbReference type="GO" id="GO:0008121">
    <property type="term" value="F:ubiquinol-cytochrome-c reductase activity"/>
    <property type="evidence" value="ECO:0007669"/>
    <property type="project" value="TreeGrafter"/>
</dbReference>
<dbReference type="GO" id="GO:0006122">
    <property type="term" value="P:mitochondrial electron transport, ubiquinol to cytochrome c"/>
    <property type="evidence" value="ECO:0007669"/>
    <property type="project" value="TreeGrafter"/>
</dbReference>
<dbReference type="CDD" id="cd00284">
    <property type="entry name" value="Cytochrome_b_N"/>
    <property type="match status" value="1"/>
</dbReference>
<dbReference type="Gene3D" id="1.20.810.10">
    <property type="entry name" value="Cytochrome Bc1 Complex, Chain C"/>
    <property type="match status" value="1"/>
</dbReference>
<dbReference type="InterPro" id="IPR005797">
    <property type="entry name" value="Cyt_b/b6_N"/>
</dbReference>
<dbReference type="InterPro" id="IPR027387">
    <property type="entry name" value="Cytb/b6-like_sf"/>
</dbReference>
<dbReference type="InterPro" id="IPR048259">
    <property type="entry name" value="Cytochrome_b_N_euk/bac"/>
</dbReference>
<dbReference type="InterPro" id="IPR016174">
    <property type="entry name" value="Di-haem_cyt_TM"/>
</dbReference>
<dbReference type="PANTHER" id="PTHR19271">
    <property type="entry name" value="CYTOCHROME B"/>
    <property type="match status" value="1"/>
</dbReference>
<dbReference type="PANTHER" id="PTHR19271:SF16">
    <property type="entry name" value="CYTOCHROME B"/>
    <property type="match status" value="1"/>
</dbReference>
<dbReference type="Pfam" id="PF00033">
    <property type="entry name" value="Cytochrome_B"/>
    <property type="match status" value="1"/>
</dbReference>
<dbReference type="SUPFAM" id="SSF81342">
    <property type="entry name" value="Transmembrane di-heme cytochromes"/>
    <property type="match status" value="1"/>
</dbReference>
<dbReference type="PROSITE" id="PS51002">
    <property type="entry name" value="CYTB_NTER"/>
    <property type="match status" value="1"/>
</dbReference>
<comment type="function">
    <text evidence="2">Component of the ubiquinol-cytochrome c reductase complex (complex III or cytochrome b-c1 complex) that is part of the mitochondrial respiratory chain. The b-c1 complex mediates electron transfer from ubiquinol to cytochrome c. Contributes to the generation of a proton gradient across the mitochondrial membrane that is then used for ATP synthesis.</text>
</comment>
<comment type="cofactor">
    <cofactor evidence="2">
        <name>heme b</name>
        <dbReference type="ChEBI" id="CHEBI:60344"/>
    </cofactor>
    <text evidence="2">Binds 2 heme b groups non-covalently.</text>
</comment>
<comment type="subunit">
    <text evidence="2">The cytochrome bc1 complex contains 11 subunits: 3 respiratory subunits (MT-CYB, CYC1 and UQCRFS1), 2 core proteins (UQCRC1 and UQCRC2) and 6 low-molecular weight proteins (UQCRH/QCR6, UQCRB/QCR7, UQCRQ/QCR8, UQCR10/QCR9, UQCR11/QCR10 and a cleavage product of UQCRFS1). This cytochrome bc1 complex then forms a dimer.</text>
</comment>
<comment type="subcellular location">
    <subcellularLocation>
        <location evidence="2">Mitochondrion inner membrane</location>
        <topology evidence="2">Multi-pass membrane protein</topology>
    </subcellularLocation>
</comment>
<comment type="miscellaneous">
    <text evidence="1">Heme 1 (or BL or b562) is low-potential and absorbs at about 562 nm, and heme 2 (or BH or b566) is high-potential and absorbs at about 566 nm.</text>
</comment>
<comment type="similarity">
    <text evidence="3">Belongs to the cytochrome b family.</text>
</comment>
<comment type="caution">
    <text evidence="2">The full-length protein contains only eight transmembrane helices, not nine as predicted by bioinformatics tools.</text>
</comment>
<gene>
    <name type="primary">MT-CYB</name>
    <name type="synonym">COB</name>
    <name type="synonym">CYTB</name>
    <name type="synonym">MTCYB</name>
</gene>
<feature type="chain" id="PRO_0000061579" description="Cytochrome b">
    <location>
        <begin position="1"/>
        <end position="134" status="greater than"/>
    </location>
</feature>
<feature type="transmembrane region" description="Helical" evidence="3">
    <location>
        <begin position="33"/>
        <end position="53"/>
    </location>
</feature>
<feature type="transmembrane region" description="Helical" evidence="2">
    <location>
        <begin position="77"/>
        <end position="98"/>
    </location>
</feature>
<feature type="transmembrane region" description="Helical" evidence="3">
    <location>
        <begin position="113"/>
        <end position="133"/>
    </location>
</feature>
<feature type="binding site" description="axial binding residue" evidence="2">
    <location>
        <position position="83"/>
    </location>
    <ligand>
        <name>heme b</name>
        <dbReference type="ChEBI" id="CHEBI:60344"/>
        <label>b562</label>
    </ligand>
    <ligandPart>
        <name>Fe</name>
        <dbReference type="ChEBI" id="CHEBI:18248"/>
    </ligandPart>
</feature>
<feature type="binding site" description="axial binding residue" evidence="2">
    <location>
        <position position="97"/>
    </location>
    <ligand>
        <name>heme b</name>
        <dbReference type="ChEBI" id="CHEBI:60344"/>
        <label>b566</label>
    </ligand>
    <ligandPart>
        <name>Fe</name>
        <dbReference type="ChEBI" id="CHEBI:18248"/>
    </ligandPart>
</feature>
<feature type="non-terminal residue">
    <location>
        <position position="134"/>
    </location>
</feature>
<name>CYB_SORSS</name>